<feature type="chain" id="PRO_1000081870" description="4-hydroxythreonine-4-phosphate dehydrogenase">
    <location>
        <begin position="1"/>
        <end position="322"/>
    </location>
</feature>
<feature type="binding site" evidence="1">
    <location>
        <position position="132"/>
    </location>
    <ligand>
        <name>substrate</name>
    </ligand>
</feature>
<feature type="binding site" evidence="1">
    <location>
        <position position="160"/>
    </location>
    <ligand>
        <name>a divalent metal cation</name>
        <dbReference type="ChEBI" id="CHEBI:60240"/>
        <note>ligand shared between dimeric partners</note>
    </ligand>
</feature>
<feature type="binding site" evidence="1">
    <location>
        <position position="205"/>
    </location>
    <ligand>
        <name>a divalent metal cation</name>
        <dbReference type="ChEBI" id="CHEBI:60240"/>
        <note>ligand shared between dimeric partners</note>
    </ligand>
</feature>
<feature type="binding site" evidence="1">
    <location>
        <position position="260"/>
    </location>
    <ligand>
        <name>a divalent metal cation</name>
        <dbReference type="ChEBI" id="CHEBI:60240"/>
        <note>ligand shared between dimeric partners</note>
    </ligand>
</feature>
<feature type="binding site" evidence="1">
    <location>
        <position position="268"/>
    </location>
    <ligand>
        <name>substrate</name>
    </ligand>
</feature>
<feature type="binding site" evidence="1">
    <location>
        <position position="277"/>
    </location>
    <ligand>
        <name>substrate</name>
    </ligand>
</feature>
<feature type="binding site" evidence="1">
    <location>
        <position position="286"/>
    </location>
    <ligand>
        <name>substrate</name>
    </ligand>
</feature>
<protein>
    <recommendedName>
        <fullName evidence="1">4-hydroxythreonine-4-phosphate dehydrogenase</fullName>
        <ecNumber evidence="1">1.1.1.262</ecNumber>
    </recommendedName>
    <alternativeName>
        <fullName evidence="1">4-(phosphohydroxy)-L-threonine dehydrogenase</fullName>
    </alternativeName>
</protein>
<proteinExistence type="inferred from homology"/>
<gene>
    <name evidence="1" type="primary">pdxA</name>
    <name type="ordered locus">XC_3439</name>
</gene>
<reference key="1">
    <citation type="journal article" date="2005" name="Genome Res.">
        <title>Comparative and functional genomic analyses of the pathogenicity of phytopathogen Xanthomonas campestris pv. campestris.</title>
        <authorList>
            <person name="Qian W."/>
            <person name="Jia Y."/>
            <person name="Ren S.-X."/>
            <person name="He Y.-Q."/>
            <person name="Feng J.-X."/>
            <person name="Lu L.-F."/>
            <person name="Sun Q."/>
            <person name="Ying G."/>
            <person name="Tang D.-J."/>
            <person name="Tang H."/>
            <person name="Wu W."/>
            <person name="Hao P."/>
            <person name="Wang L."/>
            <person name="Jiang B.-L."/>
            <person name="Zeng S."/>
            <person name="Gu W.-Y."/>
            <person name="Lu G."/>
            <person name="Rong L."/>
            <person name="Tian Y."/>
            <person name="Yao Z."/>
            <person name="Fu G."/>
            <person name="Chen B."/>
            <person name="Fang R."/>
            <person name="Qiang B."/>
            <person name="Chen Z."/>
            <person name="Zhao G.-P."/>
            <person name="Tang J.-L."/>
            <person name="He C."/>
        </authorList>
    </citation>
    <scope>NUCLEOTIDE SEQUENCE [LARGE SCALE GENOMIC DNA]</scope>
    <source>
        <strain>8004</strain>
    </source>
</reference>
<comment type="function">
    <text evidence="1">Catalyzes the NAD(P)-dependent oxidation of 4-(phosphooxy)-L-threonine (HTP) into 2-amino-3-oxo-4-(phosphooxy)butyric acid which spontaneously decarboxylates to form 3-amino-2-oxopropyl phosphate (AHAP).</text>
</comment>
<comment type="catalytic activity">
    <reaction evidence="1">
        <text>4-(phosphooxy)-L-threonine + NAD(+) = 3-amino-2-oxopropyl phosphate + CO2 + NADH</text>
        <dbReference type="Rhea" id="RHEA:32275"/>
        <dbReference type="ChEBI" id="CHEBI:16526"/>
        <dbReference type="ChEBI" id="CHEBI:57279"/>
        <dbReference type="ChEBI" id="CHEBI:57540"/>
        <dbReference type="ChEBI" id="CHEBI:57945"/>
        <dbReference type="ChEBI" id="CHEBI:58452"/>
        <dbReference type="EC" id="1.1.1.262"/>
    </reaction>
</comment>
<comment type="cofactor">
    <cofactor evidence="1">
        <name>Zn(2+)</name>
        <dbReference type="ChEBI" id="CHEBI:29105"/>
    </cofactor>
    <cofactor evidence="1">
        <name>Mg(2+)</name>
        <dbReference type="ChEBI" id="CHEBI:18420"/>
    </cofactor>
    <cofactor evidence="1">
        <name>Co(2+)</name>
        <dbReference type="ChEBI" id="CHEBI:48828"/>
    </cofactor>
    <text evidence="1">Binds 1 divalent metal cation per subunit. Can use ions such as Zn(2+), Mg(2+) or Co(2+).</text>
</comment>
<comment type="pathway">
    <text evidence="1">Cofactor biosynthesis; pyridoxine 5'-phosphate biosynthesis; pyridoxine 5'-phosphate from D-erythrose 4-phosphate: step 4/5.</text>
</comment>
<comment type="subunit">
    <text evidence="1">Homodimer.</text>
</comment>
<comment type="subcellular location">
    <subcellularLocation>
        <location evidence="1">Cytoplasm</location>
    </subcellularLocation>
</comment>
<comment type="miscellaneous">
    <text evidence="1">The active site is located at the dimer interface.</text>
</comment>
<comment type="similarity">
    <text evidence="1">Belongs to the PdxA family.</text>
</comment>
<evidence type="ECO:0000255" key="1">
    <source>
        <dbReference type="HAMAP-Rule" id="MF_00536"/>
    </source>
</evidence>
<organism>
    <name type="scientific">Xanthomonas campestris pv. campestris (strain 8004)</name>
    <dbReference type="NCBI Taxonomy" id="314565"/>
    <lineage>
        <taxon>Bacteria</taxon>
        <taxon>Pseudomonadati</taxon>
        <taxon>Pseudomonadota</taxon>
        <taxon>Gammaproteobacteria</taxon>
        <taxon>Lysobacterales</taxon>
        <taxon>Lysobacteraceae</taxon>
        <taxon>Xanthomonas</taxon>
    </lineage>
</organism>
<name>PDXA_XANC8</name>
<accession>Q4UR40</accession>
<sequence>MVPSLALVPGEPAGIGPELCIRLAQQPRSDAHLIAYADPDTLHSAAKALCLSVRLLDPDQHARLPGDLPLHPVRQAAPTRFGTPDPANAAAVIAGLLGAAGDCLSGKLQGIVTGPVHKAVINAGGIAYTGTTELLAAQAGCPVVMMLANSIVRVALVTTHLPLRAVPEAITAEALARCLRITATAMQRDFGLEHPRIAVLGLNPHAGEDGLLGREELDVIIPVLDQLRSEGMQLIGPLPADTAFLPQKLTDFDAVVAMYHDQGLPVLKYSGFEQAVNITLGLPYPRVAVDHGTALELAGRGVADPSSLLAATALCARLAARS</sequence>
<keyword id="KW-0170">Cobalt</keyword>
<keyword id="KW-0963">Cytoplasm</keyword>
<keyword id="KW-0460">Magnesium</keyword>
<keyword id="KW-0479">Metal-binding</keyword>
<keyword id="KW-0520">NAD</keyword>
<keyword id="KW-0521">NADP</keyword>
<keyword id="KW-0560">Oxidoreductase</keyword>
<keyword id="KW-0664">Pyridoxine biosynthesis</keyword>
<keyword id="KW-0862">Zinc</keyword>
<dbReference type="EC" id="1.1.1.262" evidence="1"/>
<dbReference type="EMBL" id="CP000050">
    <property type="protein sequence ID" value="AAY50483.1"/>
    <property type="molecule type" value="Genomic_DNA"/>
</dbReference>
<dbReference type="RefSeq" id="WP_011036028.1">
    <property type="nucleotide sequence ID" value="NZ_CP155948.1"/>
</dbReference>
<dbReference type="SMR" id="Q4UR40"/>
<dbReference type="KEGG" id="xcb:XC_3439"/>
<dbReference type="HOGENOM" id="CLU_040168_2_0_6"/>
<dbReference type="UniPathway" id="UPA00244">
    <property type="reaction ID" value="UER00312"/>
</dbReference>
<dbReference type="Proteomes" id="UP000000420">
    <property type="component" value="Chromosome"/>
</dbReference>
<dbReference type="GO" id="GO:0005737">
    <property type="term" value="C:cytoplasm"/>
    <property type="evidence" value="ECO:0007669"/>
    <property type="project" value="UniProtKB-SubCell"/>
</dbReference>
<dbReference type="GO" id="GO:0050570">
    <property type="term" value="F:4-hydroxythreonine-4-phosphate dehydrogenase activity"/>
    <property type="evidence" value="ECO:0007669"/>
    <property type="project" value="UniProtKB-UniRule"/>
</dbReference>
<dbReference type="GO" id="GO:0050897">
    <property type="term" value="F:cobalt ion binding"/>
    <property type="evidence" value="ECO:0007669"/>
    <property type="project" value="UniProtKB-UniRule"/>
</dbReference>
<dbReference type="GO" id="GO:0000287">
    <property type="term" value="F:magnesium ion binding"/>
    <property type="evidence" value="ECO:0007669"/>
    <property type="project" value="UniProtKB-UniRule"/>
</dbReference>
<dbReference type="GO" id="GO:0051287">
    <property type="term" value="F:NAD binding"/>
    <property type="evidence" value="ECO:0007669"/>
    <property type="project" value="InterPro"/>
</dbReference>
<dbReference type="GO" id="GO:0008270">
    <property type="term" value="F:zinc ion binding"/>
    <property type="evidence" value="ECO:0007669"/>
    <property type="project" value="UniProtKB-UniRule"/>
</dbReference>
<dbReference type="GO" id="GO:0042823">
    <property type="term" value="P:pyridoxal phosphate biosynthetic process"/>
    <property type="evidence" value="ECO:0007669"/>
    <property type="project" value="UniProtKB-UniRule"/>
</dbReference>
<dbReference type="GO" id="GO:0008615">
    <property type="term" value="P:pyridoxine biosynthetic process"/>
    <property type="evidence" value="ECO:0007669"/>
    <property type="project" value="UniProtKB-UniRule"/>
</dbReference>
<dbReference type="Gene3D" id="3.40.718.10">
    <property type="entry name" value="Isopropylmalate Dehydrogenase"/>
    <property type="match status" value="1"/>
</dbReference>
<dbReference type="HAMAP" id="MF_00536">
    <property type="entry name" value="PdxA"/>
    <property type="match status" value="1"/>
</dbReference>
<dbReference type="InterPro" id="IPR037510">
    <property type="entry name" value="PdxA"/>
</dbReference>
<dbReference type="InterPro" id="IPR005255">
    <property type="entry name" value="PdxA_fam"/>
</dbReference>
<dbReference type="NCBIfam" id="TIGR00557">
    <property type="entry name" value="pdxA"/>
    <property type="match status" value="1"/>
</dbReference>
<dbReference type="PANTHER" id="PTHR30004">
    <property type="entry name" value="4-HYDROXYTHREONINE-4-PHOSPHATE DEHYDROGENASE"/>
    <property type="match status" value="1"/>
</dbReference>
<dbReference type="PANTHER" id="PTHR30004:SF5">
    <property type="entry name" value="4-HYDROXYTHREONINE-4-PHOSPHATE DEHYDROGENASE"/>
    <property type="match status" value="1"/>
</dbReference>
<dbReference type="Pfam" id="PF04166">
    <property type="entry name" value="PdxA"/>
    <property type="match status" value="1"/>
</dbReference>
<dbReference type="SUPFAM" id="SSF53659">
    <property type="entry name" value="Isocitrate/Isopropylmalate dehydrogenase-like"/>
    <property type="match status" value="1"/>
</dbReference>